<comment type="catalytic activity">
    <reaction evidence="1">
        <text>tRNA(Leu) + L-leucine + ATP = L-leucyl-tRNA(Leu) + AMP + diphosphate</text>
        <dbReference type="Rhea" id="RHEA:11688"/>
        <dbReference type="Rhea" id="RHEA-COMP:9613"/>
        <dbReference type="Rhea" id="RHEA-COMP:9622"/>
        <dbReference type="ChEBI" id="CHEBI:30616"/>
        <dbReference type="ChEBI" id="CHEBI:33019"/>
        <dbReference type="ChEBI" id="CHEBI:57427"/>
        <dbReference type="ChEBI" id="CHEBI:78442"/>
        <dbReference type="ChEBI" id="CHEBI:78494"/>
        <dbReference type="ChEBI" id="CHEBI:456215"/>
        <dbReference type="EC" id="6.1.1.4"/>
    </reaction>
</comment>
<comment type="subcellular location">
    <subcellularLocation>
        <location evidence="1">Cytoplasm</location>
    </subcellularLocation>
</comment>
<comment type="similarity">
    <text evidence="1">Belongs to the class-I aminoacyl-tRNA synthetase family.</text>
</comment>
<feature type="chain" id="PRO_1000091303" description="Leucine--tRNA ligase">
    <location>
        <begin position="1"/>
        <end position="807"/>
    </location>
</feature>
<feature type="short sequence motif" description="'HIGH' region">
    <location>
        <begin position="40"/>
        <end position="51"/>
    </location>
</feature>
<feature type="short sequence motif" description="'KMSKS' region">
    <location>
        <begin position="576"/>
        <end position="580"/>
    </location>
</feature>
<feature type="binding site" evidence="1">
    <location>
        <position position="579"/>
    </location>
    <ligand>
        <name>ATP</name>
        <dbReference type="ChEBI" id="CHEBI:30616"/>
    </ligand>
</feature>
<evidence type="ECO:0000255" key="1">
    <source>
        <dbReference type="HAMAP-Rule" id="MF_00049"/>
    </source>
</evidence>
<protein>
    <recommendedName>
        <fullName evidence="1">Leucine--tRNA ligase</fullName>
        <ecNumber evidence="1">6.1.1.4</ecNumber>
    </recommendedName>
    <alternativeName>
        <fullName evidence="1">Leucyl-tRNA synthetase</fullName>
        <shortName evidence="1">LeuRS</shortName>
    </alternativeName>
</protein>
<gene>
    <name evidence="1" type="primary">leuS</name>
    <name type="ordered locus">Cpar_0539</name>
</gene>
<organism>
    <name type="scientific">Chlorobaculum parvum (strain DSM 263 / NCIMB 8327)</name>
    <name type="common">Chlorobium vibrioforme subsp. thiosulfatophilum</name>
    <dbReference type="NCBI Taxonomy" id="517417"/>
    <lineage>
        <taxon>Bacteria</taxon>
        <taxon>Pseudomonadati</taxon>
        <taxon>Chlorobiota</taxon>
        <taxon>Chlorobiia</taxon>
        <taxon>Chlorobiales</taxon>
        <taxon>Chlorobiaceae</taxon>
        <taxon>Chlorobaculum</taxon>
    </lineage>
</organism>
<proteinExistence type="inferred from homology"/>
<reference key="1">
    <citation type="submission" date="2008-06" db="EMBL/GenBank/DDBJ databases">
        <title>Complete sequence of Chlorobaculum parvum NCIB 8327.</title>
        <authorList>
            <consortium name="US DOE Joint Genome Institute"/>
            <person name="Lucas S."/>
            <person name="Copeland A."/>
            <person name="Lapidus A."/>
            <person name="Glavina del Rio T."/>
            <person name="Dalin E."/>
            <person name="Tice H."/>
            <person name="Bruce D."/>
            <person name="Goodwin L."/>
            <person name="Pitluck S."/>
            <person name="Schmutz J."/>
            <person name="Larimer F."/>
            <person name="Land M."/>
            <person name="Hauser L."/>
            <person name="Kyrpides N."/>
            <person name="Mikhailova N."/>
            <person name="Zhao F."/>
            <person name="Li T."/>
            <person name="Liu Z."/>
            <person name="Overmann J."/>
            <person name="Bryant D.A."/>
            <person name="Richardson P."/>
        </authorList>
    </citation>
    <scope>NUCLEOTIDE SEQUENCE [LARGE SCALE GENOMIC DNA]</scope>
    <source>
        <strain>DSM 263 / NCIMB 8327</strain>
    </source>
</reference>
<name>SYL_CHLP8</name>
<keyword id="KW-0030">Aminoacyl-tRNA synthetase</keyword>
<keyword id="KW-0067">ATP-binding</keyword>
<keyword id="KW-0963">Cytoplasm</keyword>
<keyword id="KW-0436">Ligase</keyword>
<keyword id="KW-0547">Nucleotide-binding</keyword>
<keyword id="KW-0648">Protein biosynthesis</keyword>
<sequence>MKYDFSALEKKWQARWADEQTFASSADQDKPKYYVLDMFPYPSGSGLHVGHLEGYTATDIMARYKRCQGHNVLHPMGWDAFGLPAEQFAIKTGTHPRLTTEKNVASFRETLKSMGFSYDWSREVNTTDPNYFKWTQWIFLKLYEKGLAYISEVDVNWCEELKVVLANEEVDEKIADGYTVVRRPLRQWVLKITAYAERLLEDLDEVDWPENVKQMQRNWIGRSEGVEIDFELRCHRTNLRVYTTRPDTLFGATYLVISPEHPMAEKLAIAQQLVEVKKYIEQAKLKTELERTGLQKEKTGVFTGSYAINPANGEALPVWISDFVLTSYGTGAIMSVPAHDSRDWEFAKKFGLPIREVIKSPHDVQEEVFDGKESVCVNSANDEISIDGLDFKTAFDRMATWLESKGKGKRKVNYKLRDWVFSRQRYWGEPIPIKHYEDGTMRPETNLPLTLPEVEAYHPTSTGESPLANIESWLYGEDEHGKFRRETNTMPQWAGSCWYYLRFIDPQNGNALVDPSREQYWMNVDLYIGGAEHAVLHLLYSRFWHKVLYDLGVVSTKEPFQRLFNQGMILGEDNEKMSKSRGNVIPADHVLSTYGADAVRLYEMFLGPLEQVKPWNTHGIEGISRFLNKVWRLVWDENTETQKTTDDKPSEAVLKRMHKAIKKVTEDTEQLKFNTAISEMMVLVNELTKTGCYSRETTETLLVLLSPFAPHITEELWQTLGHTESISGAVWPVFDAKLATDDVLTIAVQVNGKLRGTFEAPAGYAKEDMIESAKKVESVAKFLEGQQIIKEIAVPGKLVNFAVKPQQ</sequence>
<accession>B3QM08</accession>
<dbReference type="EC" id="6.1.1.4" evidence="1"/>
<dbReference type="EMBL" id="CP001099">
    <property type="protein sequence ID" value="ACF10961.1"/>
    <property type="molecule type" value="Genomic_DNA"/>
</dbReference>
<dbReference type="RefSeq" id="WP_012501794.1">
    <property type="nucleotide sequence ID" value="NC_011027.1"/>
</dbReference>
<dbReference type="SMR" id="B3QM08"/>
<dbReference type="STRING" id="517417.Cpar_0539"/>
<dbReference type="KEGG" id="cpc:Cpar_0539"/>
<dbReference type="eggNOG" id="COG0495">
    <property type="taxonomic scope" value="Bacteria"/>
</dbReference>
<dbReference type="HOGENOM" id="CLU_004427_0_0_10"/>
<dbReference type="OrthoDB" id="9810365at2"/>
<dbReference type="Proteomes" id="UP000008811">
    <property type="component" value="Chromosome"/>
</dbReference>
<dbReference type="GO" id="GO:0005829">
    <property type="term" value="C:cytosol"/>
    <property type="evidence" value="ECO:0007669"/>
    <property type="project" value="TreeGrafter"/>
</dbReference>
<dbReference type="GO" id="GO:0002161">
    <property type="term" value="F:aminoacyl-tRNA deacylase activity"/>
    <property type="evidence" value="ECO:0007669"/>
    <property type="project" value="InterPro"/>
</dbReference>
<dbReference type="GO" id="GO:0005524">
    <property type="term" value="F:ATP binding"/>
    <property type="evidence" value="ECO:0007669"/>
    <property type="project" value="UniProtKB-UniRule"/>
</dbReference>
<dbReference type="GO" id="GO:0004823">
    <property type="term" value="F:leucine-tRNA ligase activity"/>
    <property type="evidence" value="ECO:0007669"/>
    <property type="project" value="UniProtKB-UniRule"/>
</dbReference>
<dbReference type="GO" id="GO:0006429">
    <property type="term" value="P:leucyl-tRNA aminoacylation"/>
    <property type="evidence" value="ECO:0007669"/>
    <property type="project" value="UniProtKB-UniRule"/>
</dbReference>
<dbReference type="CDD" id="cd07958">
    <property type="entry name" value="Anticodon_Ia_Leu_BEm"/>
    <property type="match status" value="1"/>
</dbReference>
<dbReference type="CDD" id="cd00812">
    <property type="entry name" value="LeuRS_core"/>
    <property type="match status" value="1"/>
</dbReference>
<dbReference type="FunFam" id="3.40.50.620:FF:000056">
    <property type="entry name" value="Leucine--tRNA ligase"/>
    <property type="match status" value="1"/>
</dbReference>
<dbReference type="FunFam" id="3.40.50.620:FF:000077">
    <property type="entry name" value="Leucine--tRNA ligase"/>
    <property type="match status" value="1"/>
</dbReference>
<dbReference type="FunFam" id="1.10.730.10:FF:000011">
    <property type="entry name" value="Leucine--tRNA ligase chloroplastic/mitochondrial"/>
    <property type="match status" value="1"/>
</dbReference>
<dbReference type="Gene3D" id="3.10.20.590">
    <property type="match status" value="1"/>
</dbReference>
<dbReference type="Gene3D" id="3.40.50.620">
    <property type="entry name" value="HUPs"/>
    <property type="match status" value="2"/>
</dbReference>
<dbReference type="Gene3D" id="1.10.730.10">
    <property type="entry name" value="Isoleucyl-tRNA Synthetase, Domain 1"/>
    <property type="match status" value="1"/>
</dbReference>
<dbReference type="HAMAP" id="MF_00049_B">
    <property type="entry name" value="Leu_tRNA_synth_B"/>
    <property type="match status" value="1"/>
</dbReference>
<dbReference type="InterPro" id="IPR002300">
    <property type="entry name" value="aa-tRNA-synth_Ia"/>
</dbReference>
<dbReference type="InterPro" id="IPR002302">
    <property type="entry name" value="Leu-tRNA-ligase"/>
</dbReference>
<dbReference type="InterPro" id="IPR025709">
    <property type="entry name" value="Leu_tRNA-synth_edit"/>
</dbReference>
<dbReference type="InterPro" id="IPR013155">
    <property type="entry name" value="M/V/L/I-tRNA-synth_anticd-bd"/>
</dbReference>
<dbReference type="InterPro" id="IPR015413">
    <property type="entry name" value="Methionyl/Leucyl_tRNA_Synth"/>
</dbReference>
<dbReference type="InterPro" id="IPR014729">
    <property type="entry name" value="Rossmann-like_a/b/a_fold"/>
</dbReference>
<dbReference type="InterPro" id="IPR009080">
    <property type="entry name" value="tRNAsynth_Ia_anticodon-bd"/>
</dbReference>
<dbReference type="InterPro" id="IPR009008">
    <property type="entry name" value="Val/Leu/Ile-tRNA-synth_edit"/>
</dbReference>
<dbReference type="NCBIfam" id="TIGR00396">
    <property type="entry name" value="leuS_bact"/>
    <property type="match status" value="1"/>
</dbReference>
<dbReference type="PANTHER" id="PTHR43740:SF2">
    <property type="entry name" value="LEUCINE--TRNA LIGASE, MITOCHONDRIAL"/>
    <property type="match status" value="1"/>
</dbReference>
<dbReference type="PANTHER" id="PTHR43740">
    <property type="entry name" value="LEUCYL-TRNA SYNTHETASE"/>
    <property type="match status" value="1"/>
</dbReference>
<dbReference type="Pfam" id="PF08264">
    <property type="entry name" value="Anticodon_1"/>
    <property type="match status" value="1"/>
</dbReference>
<dbReference type="Pfam" id="PF00133">
    <property type="entry name" value="tRNA-synt_1"/>
    <property type="match status" value="1"/>
</dbReference>
<dbReference type="Pfam" id="PF13603">
    <property type="entry name" value="tRNA-synt_1_2"/>
    <property type="match status" value="1"/>
</dbReference>
<dbReference type="Pfam" id="PF09334">
    <property type="entry name" value="tRNA-synt_1g"/>
    <property type="match status" value="1"/>
</dbReference>
<dbReference type="PRINTS" id="PR00985">
    <property type="entry name" value="TRNASYNTHLEU"/>
</dbReference>
<dbReference type="SUPFAM" id="SSF47323">
    <property type="entry name" value="Anticodon-binding domain of a subclass of class I aminoacyl-tRNA synthetases"/>
    <property type="match status" value="1"/>
</dbReference>
<dbReference type="SUPFAM" id="SSF52374">
    <property type="entry name" value="Nucleotidylyl transferase"/>
    <property type="match status" value="1"/>
</dbReference>
<dbReference type="SUPFAM" id="SSF50677">
    <property type="entry name" value="ValRS/IleRS/LeuRS editing domain"/>
    <property type="match status" value="1"/>
</dbReference>